<feature type="signal peptide" evidence="1">
    <location>
        <begin position="1"/>
        <end position="25"/>
    </location>
</feature>
<feature type="chain" id="PRO_0000033003" description="Somatotropin">
    <location>
        <begin position="26"/>
        <end position="216"/>
    </location>
</feature>
<feature type="binding site" evidence="1">
    <location>
        <position position="46"/>
    </location>
    <ligand>
        <name>Zn(2+)</name>
        <dbReference type="ChEBI" id="CHEBI:29105"/>
    </ligand>
</feature>
<feature type="binding site" evidence="1">
    <location>
        <position position="198"/>
    </location>
    <ligand>
        <name>Zn(2+)</name>
        <dbReference type="ChEBI" id="CHEBI:29105"/>
    </ligand>
</feature>
<feature type="disulfide bond" evidence="1">
    <location>
        <begin position="78"/>
        <end position="189"/>
    </location>
</feature>
<feature type="disulfide bond" evidence="1">
    <location>
        <begin position="206"/>
        <end position="214"/>
    </location>
</feature>
<keyword id="KW-1015">Disulfide bond</keyword>
<keyword id="KW-0372">Hormone</keyword>
<keyword id="KW-0479">Metal-binding</keyword>
<keyword id="KW-0964">Secreted</keyword>
<keyword id="KW-0732">Signal</keyword>
<keyword id="KW-0862">Zinc</keyword>
<comment type="function">
    <text>Growth hormone plays an important role in growth control.</text>
</comment>
<comment type="subcellular location">
    <subcellularLocation>
        <location>Secreted</location>
    </subcellularLocation>
</comment>
<comment type="similarity">
    <text evidence="2">Belongs to the somatotropin/prolactin family.</text>
</comment>
<reference key="1">
    <citation type="journal article" date="1988" name="Biochim. Biophys. Acta">
        <title>Purification of duck growth hormone and cloning of the complementary DNA.</title>
        <authorList>
            <person name="Chen H.-T."/>
            <person name="Pan F.-M."/>
            <person name="Chang W.-C."/>
        </authorList>
    </citation>
    <scope>NUCLEOTIDE SEQUENCE [MRNA]</scope>
    <source>
        <tissue>Pituitary</tissue>
    </source>
</reference>
<sequence>MAPGSWFSPLFITVITLGLQWPQEAATFPAMPLSNLFANAVLRAQHLHLLAAETYKEFERSYIPEDQRHTNKNSQAFCYSETIPAPTGKDDAQQKSDMELLRFSLVLIQSWLTPVQYLSKVFTNNLVFGTSDRVFEKLKDLEEGIQALMRELEDRSPRGPQLLKPTYDKFDIHLRNEDALLKNYGLLSCFKKDLHKVETYLKVMKCRRFGESNCTI</sequence>
<gene>
    <name type="primary">GH</name>
</gene>
<dbReference type="EMBL" id="X07079">
    <property type="protein sequence ID" value="CAA30113.1"/>
    <property type="molecule type" value="mRNA"/>
</dbReference>
<dbReference type="RefSeq" id="NP_001297274.1">
    <property type="nucleotide sequence ID" value="NM_001310345.1"/>
</dbReference>
<dbReference type="SMR" id="P11228"/>
<dbReference type="Ensembl" id="ENSAPLT00020019969.1">
    <property type="protein sequence ID" value="ENSAPLP00020018467.1"/>
    <property type="gene ID" value="ENSAPLG00020013139.1"/>
</dbReference>
<dbReference type="GeneID" id="101790997"/>
<dbReference type="KEGG" id="apla:101790997"/>
<dbReference type="CTD" id="2688"/>
<dbReference type="OrthoDB" id="9925773at2759"/>
<dbReference type="Proteomes" id="UP000694400">
    <property type="component" value="Chromosome 25"/>
</dbReference>
<dbReference type="GO" id="GO:0005615">
    <property type="term" value="C:extracellular space"/>
    <property type="evidence" value="ECO:0000250"/>
    <property type="project" value="AgBase"/>
</dbReference>
<dbReference type="GO" id="GO:0008083">
    <property type="term" value="F:growth factor activity"/>
    <property type="evidence" value="ECO:0007669"/>
    <property type="project" value="TreeGrafter"/>
</dbReference>
<dbReference type="GO" id="GO:0005131">
    <property type="term" value="F:growth hormone receptor binding"/>
    <property type="evidence" value="ECO:0007669"/>
    <property type="project" value="InterPro"/>
</dbReference>
<dbReference type="GO" id="GO:0005179">
    <property type="term" value="F:hormone activity"/>
    <property type="evidence" value="ECO:0007669"/>
    <property type="project" value="UniProtKB-KW"/>
</dbReference>
<dbReference type="GO" id="GO:0046872">
    <property type="term" value="F:metal ion binding"/>
    <property type="evidence" value="ECO:0007669"/>
    <property type="project" value="UniProtKB-KW"/>
</dbReference>
<dbReference type="GO" id="GO:0048018">
    <property type="term" value="F:receptor ligand activity"/>
    <property type="evidence" value="ECO:0000250"/>
    <property type="project" value="AgBase"/>
</dbReference>
<dbReference type="GO" id="GO:0048513">
    <property type="term" value="P:animal organ development"/>
    <property type="evidence" value="ECO:0007669"/>
    <property type="project" value="TreeGrafter"/>
</dbReference>
<dbReference type="GO" id="GO:0060396">
    <property type="term" value="P:growth hormone receptor signaling pathway"/>
    <property type="evidence" value="ECO:0007669"/>
    <property type="project" value="TreeGrafter"/>
</dbReference>
<dbReference type="GO" id="GO:0043066">
    <property type="term" value="P:negative regulation of apoptotic process"/>
    <property type="evidence" value="ECO:0000250"/>
    <property type="project" value="AgBase"/>
</dbReference>
<dbReference type="GO" id="GO:0010629">
    <property type="term" value="P:negative regulation of gene expression"/>
    <property type="evidence" value="ECO:0000250"/>
    <property type="project" value="AgBase"/>
</dbReference>
<dbReference type="GO" id="GO:0035846">
    <property type="term" value="P:oviduct epithelium development"/>
    <property type="evidence" value="ECO:0000250"/>
    <property type="project" value="AgBase"/>
</dbReference>
<dbReference type="GO" id="GO:0010628">
    <property type="term" value="P:positive regulation of gene expression"/>
    <property type="evidence" value="ECO:0000250"/>
    <property type="project" value="AgBase"/>
</dbReference>
<dbReference type="GO" id="GO:0045927">
    <property type="term" value="P:positive regulation of growth"/>
    <property type="evidence" value="ECO:0007669"/>
    <property type="project" value="TreeGrafter"/>
</dbReference>
<dbReference type="GO" id="GO:0046427">
    <property type="term" value="P:positive regulation of receptor signaling pathway via JAK-STAT"/>
    <property type="evidence" value="ECO:0007669"/>
    <property type="project" value="TreeGrafter"/>
</dbReference>
<dbReference type="GO" id="GO:0031667">
    <property type="term" value="P:response to nutrient levels"/>
    <property type="evidence" value="ECO:0007669"/>
    <property type="project" value="TreeGrafter"/>
</dbReference>
<dbReference type="CDD" id="cd10285">
    <property type="entry name" value="somatotropin_like"/>
    <property type="match status" value="1"/>
</dbReference>
<dbReference type="FunFam" id="1.20.1250.10:FF:000002">
    <property type="entry name" value="Growth hormone"/>
    <property type="match status" value="1"/>
</dbReference>
<dbReference type="Gene3D" id="1.20.1250.10">
    <property type="match status" value="1"/>
</dbReference>
<dbReference type="InterPro" id="IPR009079">
    <property type="entry name" value="4_helix_cytokine-like_core"/>
</dbReference>
<dbReference type="InterPro" id="IPR034975">
    <property type="entry name" value="Somatotropin"/>
</dbReference>
<dbReference type="InterPro" id="IPR001400">
    <property type="entry name" value="Somatotropin/Prolactin"/>
</dbReference>
<dbReference type="InterPro" id="IPR018116">
    <property type="entry name" value="Somatotropin_CS"/>
</dbReference>
<dbReference type="PANTHER" id="PTHR11417:SF2">
    <property type="entry name" value="SOMATOTROPIN"/>
    <property type="match status" value="1"/>
</dbReference>
<dbReference type="PANTHER" id="PTHR11417">
    <property type="entry name" value="SOMATOTROPIN,PROLACTIN"/>
    <property type="match status" value="1"/>
</dbReference>
<dbReference type="Pfam" id="PF00103">
    <property type="entry name" value="Hormone_1"/>
    <property type="match status" value="1"/>
</dbReference>
<dbReference type="PRINTS" id="PR00836">
    <property type="entry name" value="SOMATOTROPIN"/>
</dbReference>
<dbReference type="SUPFAM" id="SSF47266">
    <property type="entry name" value="4-helical cytokines"/>
    <property type="match status" value="1"/>
</dbReference>
<dbReference type="PROSITE" id="PS00266">
    <property type="entry name" value="SOMATOTROPIN_1"/>
    <property type="match status" value="1"/>
</dbReference>
<dbReference type="PROSITE" id="PS00338">
    <property type="entry name" value="SOMATOTROPIN_2"/>
    <property type="match status" value="1"/>
</dbReference>
<name>SOMA_ANAPL</name>
<proteinExistence type="evidence at transcript level"/>
<organism>
    <name type="scientific">Anas platyrhynchos</name>
    <name type="common">Mallard</name>
    <name type="synonym">Anas boschas</name>
    <dbReference type="NCBI Taxonomy" id="8839"/>
    <lineage>
        <taxon>Eukaryota</taxon>
        <taxon>Metazoa</taxon>
        <taxon>Chordata</taxon>
        <taxon>Craniata</taxon>
        <taxon>Vertebrata</taxon>
        <taxon>Euteleostomi</taxon>
        <taxon>Archelosauria</taxon>
        <taxon>Archosauria</taxon>
        <taxon>Dinosauria</taxon>
        <taxon>Saurischia</taxon>
        <taxon>Theropoda</taxon>
        <taxon>Coelurosauria</taxon>
        <taxon>Aves</taxon>
        <taxon>Neognathae</taxon>
        <taxon>Galloanserae</taxon>
        <taxon>Anseriformes</taxon>
        <taxon>Anatidae</taxon>
        <taxon>Anatinae</taxon>
        <taxon>Anas</taxon>
    </lineage>
</organism>
<evidence type="ECO:0000250" key="1"/>
<evidence type="ECO:0000305" key="2"/>
<accession>P11228</accession>
<protein>
    <recommendedName>
        <fullName>Somatotropin</fullName>
    </recommendedName>
    <alternativeName>
        <fullName>Growth hormone</fullName>
    </alternativeName>
</protein>